<protein>
    <recommendedName>
        <fullName evidence="1">Fe/S biogenesis protein NfuA</fullName>
    </recommendedName>
</protein>
<accession>Q7MPY4</accession>
<comment type="function">
    <text evidence="1">Involved in iron-sulfur cluster biogenesis. Binds a 4Fe-4S cluster, can transfer this cluster to apoproteins, and thereby intervenes in the maturation of Fe/S proteins. Could also act as a scaffold/chaperone for damaged Fe/S proteins.</text>
</comment>
<comment type="cofactor">
    <cofactor evidence="1">
        <name>[4Fe-4S] cluster</name>
        <dbReference type="ChEBI" id="CHEBI:49883"/>
    </cofactor>
    <text evidence="1">Binds 1 [4Fe-4S] cluster per subunit. The cluster is presumably bound at the interface of two monomers.</text>
</comment>
<comment type="subunit">
    <text evidence="1">Homodimer.</text>
</comment>
<comment type="similarity">
    <text evidence="1">Belongs to the NfuA family.</text>
</comment>
<comment type="sequence caution" evidence="2">
    <conflict type="erroneous initiation">
        <sequence resource="EMBL-CDS" id="BAC92991"/>
    </conflict>
</comment>
<name>NFUA_VIBVY</name>
<feature type="chain" id="PRO_0000209488" description="Fe/S biogenesis protein NfuA">
    <location>
        <begin position="1"/>
        <end position="194"/>
    </location>
</feature>
<feature type="binding site" evidence="1">
    <location>
        <position position="151"/>
    </location>
    <ligand>
        <name>[4Fe-4S] cluster</name>
        <dbReference type="ChEBI" id="CHEBI:49883"/>
    </ligand>
</feature>
<feature type="binding site" evidence="1">
    <location>
        <position position="154"/>
    </location>
    <ligand>
        <name>[4Fe-4S] cluster</name>
        <dbReference type="ChEBI" id="CHEBI:49883"/>
    </ligand>
</feature>
<sequence>MSNITITEAAQTHFANLLGQQPDGTNIRVFVVNPGTQNAECGVSYCPPEAVEATDTEIPYQSFSAYVDELSLPFLEDAEIDYVTDKMGSQLTLKAPNAKMRKVADDAPLLERVEYAIQTQVNPQLAGHGGHVKLMEITDAGVAIVAFGGGCNGCSMVDVTLKEGIEKELLQQFSGELTAVRDATEHDRGDHSYY</sequence>
<organism>
    <name type="scientific">Vibrio vulnificus (strain YJ016)</name>
    <dbReference type="NCBI Taxonomy" id="196600"/>
    <lineage>
        <taxon>Bacteria</taxon>
        <taxon>Pseudomonadati</taxon>
        <taxon>Pseudomonadota</taxon>
        <taxon>Gammaproteobacteria</taxon>
        <taxon>Vibrionales</taxon>
        <taxon>Vibrionaceae</taxon>
        <taxon>Vibrio</taxon>
    </lineage>
</organism>
<keyword id="KW-0004">4Fe-4S</keyword>
<keyword id="KW-0408">Iron</keyword>
<keyword id="KW-0411">Iron-sulfur</keyword>
<keyword id="KW-0479">Metal-binding</keyword>
<evidence type="ECO:0000255" key="1">
    <source>
        <dbReference type="HAMAP-Rule" id="MF_01637"/>
    </source>
</evidence>
<evidence type="ECO:0000305" key="2"/>
<reference key="1">
    <citation type="journal article" date="2003" name="Genome Res.">
        <title>Comparative genome analysis of Vibrio vulnificus, a marine pathogen.</title>
        <authorList>
            <person name="Chen C.-Y."/>
            <person name="Wu K.-M."/>
            <person name="Chang Y.-C."/>
            <person name="Chang C.-H."/>
            <person name="Tsai H.-C."/>
            <person name="Liao T.-L."/>
            <person name="Liu Y.-M."/>
            <person name="Chen H.-J."/>
            <person name="Shen A.B.-T."/>
            <person name="Li J.-C."/>
            <person name="Su T.-L."/>
            <person name="Shao C.-P."/>
            <person name="Lee C.-T."/>
            <person name="Hor L.-I."/>
            <person name="Tsai S.-F."/>
        </authorList>
    </citation>
    <scope>NUCLEOTIDE SEQUENCE [LARGE SCALE GENOMIC DNA]</scope>
    <source>
        <strain>YJ016</strain>
    </source>
</reference>
<dbReference type="EMBL" id="BA000037">
    <property type="protein sequence ID" value="BAC92991.1"/>
    <property type="status" value="ALT_INIT"/>
    <property type="molecule type" value="Genomic_DNA"/>
</dbReference>
<dbReference type="RefSeq" id="WP_026050270.1">
    <property type="nucleotide sequence ID" value="NC_005139.1"/>
</dbReference>
<dbReference type="SMR" id="Q7MPY4"/>
<dbReference type="STRING" id="672.VV93_v1c02090"/>
<dbReference type="GeneID" id="93895162"/>
<dbReference type="KEGG" id="vvy:VV0227"/>
<dbReference type="eggNOG" id="COG0316">
    <property type="taxonomic scope" value="Bacteria"/>
</dbReference>
<dbReference type="eggNOG" id="COG0694">
    <property type="taxonomic scope" value="Bacteria"/>
</dbReference>
<dbReference type="HOGENOM" id="CLU_094569_0_0_6"/>
<dbReference type="Proteomes" id="UP000002675">
    <property type="component" value="Chromosome I"/>
</dbReference>
<dbReference type="GO" id="GO:0051539">
    <property type="term" value="F:4 iron, 4 sulfur cluster binding"/>
    <property type="evidence" value="ECO:0007669"/>
    <property type="project" value="UniProtKB-UniRule"/>
</dbReference>
<dbReference type="GO" id="GO:0005506">
    <property type="term" value="F:iron ion binding"/>
    <property type="evidence" value="ECO:0007669"/>
    <property type="project" value="InterPro"/>
</dbReference>
<dbReference type="GO" id="GO:0016226">
    <property type="term" value="P:iron-sulfur cluster assembly"/>
    <property type="evidence" value="ECO:0007669"/>
    <property type="project" value="UniProtKB-UniRule"/>
</dbReference>
<dbReference type="GO" id="GO:0051604">
    <property type="term" value="P:protein maturation"/>
    <property type="evidence" value="ECO:0007669"/>
    <property type="project" value="UniProtKB-UniRule"/>
</dbReference>
<dbReference type="Gene3D" id="3.30.300.130">
    <property type="entry name" value="Fe-S cluster assembly (FSCA)"/>
    <property type="match status" value="1"/>
</dbReference>
<dbReference type="Gene3D" id="2.60.300.12">
    <property type="entry name" value="HesB-like domain"/>
    <property type="match status" value="1"/>
</dbReference>
<dbReference type="HAMAP" id="MF_01637">
    <property type="entry name" value="Fe_S_biogen_NfuA"/>
    <property type="match status" value="1"/>
</dbReference>
<dbReference type="InterPro" id="IPR017726">
    <property type="entry name" value="Fe/S_biogenesis_protein_NfuA"/>
</dbReference>
<dbReference type="InterPro" id="IPR000361">
    <property type="entry name" value="FeS_biogenesis"/>
</dbReference>
<dbReference type="InterPro" id="IPR034904">
    <property type="entry name" value="FSCA_dom_sf"/>
</dbReference>
<dbReference type="InterPro" id="IPR035903">
    <property type="entry name" value="HesB-like_dom_sf"/>
</dbReference>
<dbReference type="InterPro" id="IPR001075">
    <property type="entry name" value="NIF_FeS_clus_asmbl_NifU_C"/>
</dbReference>
<dbReference type="NCBIfam" id="NF008392">
    <property type="entry name" value="PRK11190.1"/>
    <property type="match status" value="1"/>
</dbReference>
<dbReference type="NCBIfam" id="TIGR03341">
    <property type="entry name" value="YhgI_GntY"/>
    <property type="match status" value="1"/>
</dbReference>
<dbReference type="PANTHER" id="PTHR11178:SF51">
    <property type="entry name" value="FE_S BIOGENESIS PROTEIN NFUA"/>
    <property type="match status" value="1"/>
</dbReference>
<dbReference type="PANTHER" id="PTHR11178">
    <property type="entry name" value="IRON-SULFUR CLUSTER SCAFFOLD PROTEIN NFU-RELATED"/>
    <property type="match status" value="1"/>
</dbReference>
<dbReference type="Pfam" id="PF01521">
    <property type="entry name" value="Fe-S_biosyn"/>
    <property type="match status" value="1"/>
</dbReference>
<dbReference type="Pfam" id="PF01106">
    <property type="entry name" value="NifU"/>
    <property type="match status" value="1"/>
</dbReference>
<dbReference type="SUPFAM" id="SSF117916">
    <property type="entry name" value="Fe-S cluster assembly (FSCA) domain-like"/>
    <property type="match status" value="1"/>
</dbReference>
<dbReference type="SUPFAM" id="SSF89360">
    <property type="entry name" value="HesB-like domain"/>
    <property type="match status" value="1"/>
</dbReference>
<proteinExistence type="inferred from homology"/>
<gene>
    <name evidence="1" type="primary">nfuA</name>
    <name type="ordered locus">VV0227</name>
</gene>